<protein>
    <recommendedName>
        <fullName>Homeobox protein engrailed-like</fullName>
        <shortName>EN</shortName>
    </recommendedName>
</protein>
<proteinExistence type="inferred from homology"/>
<organism>
    <name type="scientific">Lampetra planeri</name>
    <name type="common">Brook lamprey</name>
    <name type="synonym">Petromyzon planeri</name>
    <dbReference type="NCBI Taxonomy" id="7750"/>
    <lineage>
        <taxon>Eukaryota</taxon>
        <taxon>Metazoa</taxon>
        <taxon>Chordata</taxon>
        <taxon>Craniata</taxon>
        <taxon>Vertebrata</taxon>
        <taxon>Cyclostomata</taxon>
        <taxon>Hyperoartia</taxon>
        <taxon>Petromyzontiformes</taxon>
        <taxon>Petromyzontidae</taxon>
        <taxon>Lampetra</taxon>
    </lineage>
</organism>
<evidence type="ECO:0000255" key="1">
    <source>
        <dbReference type="PROSITE-ProRule" id="PRU00108"/>
    </source>
</evidence>
<evidence type="ECO:0000305" key="2"/>
<feature type="chain" id="PRO_0000196086" description="Homeobox protein engrailed-like">
    <location>
        <begin position="1" status="less than"/>
        <end position="60" status="greater than"/>
    </location>
</feature>
<feature type="DNA-binding region" description="Homeobox" evidence="1">
    <location>
        <begin position="1" status="less than"/>
        <end position="41"/>
    </location>
</feature>
<feature type="non-terminal residue">
    <location>
        <position position="1"/>
    </location>
</feature>
<feature type="non-terminal residue">
    <location>
        <position position="60"/>
    </location>
</feature>
<reference key="1">
    <citation type="journal article" date="1990" name="FEBS Lett.">
        <title>Conservation of engrailed-like homeobox sequences during vertebrate evolution.</title>
        <authorList>
            <person name="Holland P.W.H."/>
            <person name="Williams N.A."/>
        </authorList>
    </citation>
    <scope>NUCLEOTIDE SEQUENCE [GENOMIC DNA]</scope>
</reference>
<accession>P31534</accession>
<name>HMEN_LAMPL</name>
<keyword id="KW-0217">Developmental protein</keyword>
<keyword id="KW-0238">DNA-binding</keyword>
<keyword id="KW-0371">Homeobox</keyword>
<keyword id="KW-0539">Nucleus</keyword>
<comment type="subcellular location">
    <subcellularLocation>
        <location evidence="2">Nucleus</location>
    </subcellularLocation>
</comment>
<comment type="similarity">
    <text evidence="2">Belongs to the engrailed homeobox family.</text>
</comment>
<dbReference type="EMBL" id="X59122">
    <property type="status" value="NOT_ANNOTATED_CDS"/>
    <property type="molecule type" value="Genomic_DNA"/>
</dbReference>
<dbReference type="PIR" id="S13012">
    <property type="entry name" value="S13012"/>
</dbReference>
<dbReference type="SMR" id="P31534"/>
<dbReference type="GO" id="GO:0005634">
    <property type="term" value="C:nucleus"/>
    <property type="evidence" value="ECO:0007669"/>
    <property type="project" value="UniProtKB-SubCell"/>
</dbReference>
<dbReference type="GO" id="GO:0000981">
    <property type="term" value="F:DNA-binding transcription factor activity, RNA polymerase II-specific"/>
    <property type="evidence" value="ECO:0007669"/>
    <property type="project" value="InterPro"/>
</dbReference>
<dbReference type="GO" id="GO:0000978">
    <property type="term" value="F:RNA polymerase II cis-regulatory region sequence-specific DNA binding"/>
    <property type="evidence" value="ECO:0007669"/>
    <property type="project" value="TreeGrafter"/>
</dbReference>
<dbReference type="GO" id="GO:0030182">
    <property type="term" value="P:neuron differentiation"/>
    <property type="evidence" value="ECO:0007669"/>
    <property type="project" value="TreeGrafter"/>
</dbReference>
<dbReference type="CDD" id="cd00086">
    <property type="entry name" value="homeodomain"/>
    <property type="match status" value="1"/>
</dbReference>
<dbReference type="Gene3D" id="1.10.10.60">
    <property type="entry name" value="Homeodomain-like"/>
    <property type="match status" value="1"/>
</dbReference>
<dbReference type="InterPro" id="IPR050720">
    <property type="entry name" value="Engrailed_Homeobox_TFs"/>
</dbReference>
<dbReference type="InterPro" id="IPR001356">
    <property type="entry name" value="HD"/>
</dbReference>
<dbReference type="InterPro" id="IPR020479">
    <property type="entry name" value="HD_metazoa"/>
</dbReference>
<dbReference type="InterPro" id="IPR017970">
    <property type="entry name" value="Homeobox_CS"/>
</dbReference>
<dbReference type="InterPro" id="IPR009057">
    <property type="entry name" value="Homeodomain-like_sf"/>
</dbReference>
<dbReference type="PANTHER" id="PTHR24341">
    <property type="entry name" value="HOMEOBOX PROTEIN ENGRAILED"/>
    <property type="match status" value="1"/>
</dbReference>
<dbReference type="PANTHER" id="PTHR24341:SF6">
    <property type="entry name" value="HOMEOBOX PROTEIN INVECTED"/>
    <property type="match status" value="1"/>
</dbReference>
<dbReference type="Pfam" id="PF00046">
    <property type="entry name" value="Homeodomain"/>
    <property type="match status" value="1"/>
</dbReference>
<dbReference type="PRINTS" id="PR00024">
    <property type="entry name" value="HOMEOBOX"/>
</dbReference>
<dbReference type="SMART" id="SM00389">
    <property type="entry name" value="HOX"/>
    <property type="match status" value="1"/>
</dbReference>
<dbReference type="SUPFAM" id="SSF46689">
    <property type="entry name" value="Homeodomain-like"/>
    <property type="match status" value="1"/>
</dbReference>
<dbReference type="PROSITE" id="PS00027">
    <property type="entry name" value="HOMEOBOX_1"/>
    <property type="match status" value="1"/>
</dbReference>
<dbReference type="PROSITE" id="PS50071">
    <property type="entry name" value="HOMEOBOX_2"/>
    <property type="match status" value="1"/>
</dbReference>
<sequence>GEQLCRLRAEFQASRYLTEERRTALARELRLNEAQIKIWFQNKRAKIKKASGVKNALALY</sequence>